<accession>P67233</accession>
<accession>A0A1R3Y0Y0</accession>
<accession>Q10403</accession>
<accession>X2BKG8</accession>
<feature type="chain" id="PRO_0000162408" description="Epimerase family protein Mb2239">
    <location>
        <begin position="1"/>
        <end position="301"/>
    </location>
</feature>
<gene>
    <name type="ordered locus">BQ2027_MB2239</name>
</gene>
<protein>
    <recommendedName>
        <fullName>Epimerase family protein Mb2239</fullName>
    </recommendedName>
</protein>
<keyword id="KW-1185">Reference proteome</keyword>
<evidence type="ECO:0000305" key="1"/>
<sequence length="301" mass="31672">MANAVVAIAGSSGLIGSALTAALRAADHTVLRIVRRAPANSEELHWNPESGEFDPHALTDVDAVVNLCGVNIAQRRWSGAFKQSLRDSRITPTEVLSAAVADAGVATLINASAVGYYGNTKDRVVDENDSAGTGFLAQLCVDWETATRPAQQSGARVVLARTGVVLSPAGGMLRRMRPLFSVGLGARLGSGRQYMSWISLEDEVRALQFAIAQPNLSGPVNLTGPAPVTNAEFTTAFGRAVNRPTPLMLPSVAVRAAFGEFADEGLLIGQRAIPSALERAGFQFHHNTIGEALGYATTRPG</sequence>
<name>Y2239_MYCBO</name>
<dbReference type="EMBL" id="LT708304">
    <property type="protein sequence ID" value="SIU00847.1"/>
    <property type="molecule type" value="Genomic_DNA"/>
</dbReference>
<dbReference type="RefSeq" id="NP_855888.1">
    <property type="nucleotide sequence ID" value="NC_002945.3"/>
</dbReference>
<dbReference type="RefSeq" id="WP_003411454.1">
    <property type="nucleotide sequence ID" value="NC_002945.4"/>
</dbReference>
<dbReference type="SMR" id="P67233"/>
<dbReference type="KEGG" id="mbo:BQ2027_MB2239"/>
<dbReference type="PATRIC" id="fig|233413.5.peg.2455"/>
<dbReference type="Proteomes" id="UP000001419">
    <property type="component" value="Chromosome"/>
</dbReference>
<dbReference type="CDD" id="cd05242">
    <property type="entry name" value="SDR_a8"/>
    <property type="match status" value="1"/>
</dbReference>
<dbReference type="Gene3D" id="3.40.50.720">
    <property type="entry name" value="NAD(P)-binding Rossmann-like Domain"/>
    <property type="match status" value="1"/>
</dbReference>
<dbReference type="InterPro" id="IPR013549">
    <property type="entry name" value="DUF1731"/>
</dbReference>
<dbReference type="InterPro" id="IPR001509">
    <property type="entry name" value="Epimerase_deHydtase"/>
</dbReference>
<dbReference type="InterPro" id="IPR036291">
    <property type="entry name" value="NAD(P)-bd_dom_sf"/>
</dbReference>
<dbReference type="InterPro" id="IPR010099">
    <property type="entry name" value="SDR39U1"/>
</dbReference>
<dbReference type="NCBIfam" id="TIGR01777">
    <property type="entry name" value="yfcH"/>
    <property type="match status" value="1"/>
</dbReference>
<dbReference type="PANTHER" id="PTHR11092:SF0">
    <property type="entry name" value="EPIMERASE FAMILY PROTEIN SDR39U1"/>
    <property type="match status" value="1"/>
</dbReference>
<dbReference type="PANTHER" id="PTHR11092">
    <property type="entry name" value="SUGAR NUCLEOTIDE EPIMERASE RELATED"/>
    <property type="match status" value="1"/>
</dbReference>
<dbReference type="Pfam" id="PF08338">
    <property type="entry name" value="DUF1731"/>
    <property type="match status" value="1"/>
</dbReference>
<dbReference type="Pfam" id="PF01370">
    <property type="entry name" value="Epimerase"/>
    <property type="match status" value="1"/>
</dbReference>
<dbReference type="SUPFAM" id="SSF51735">
    <property type="entry name" value="NAD(P)-binding Rossmann-fold domains"/>
    <property type="match status" value="1"/>
</dbReference>
<comment type="similarity">
    <text evidence="1">Belongs to the NAD(P)-dependent epimerase/dehydratase family. SDR39U1 subfamily.</text>
</comment>
<proteinExistence type="inferred from homology"/>
<reference key="1">
    <citation type="journal article" date="2003" name="Proc. Natl. Acad. Sci. U.S.A.">
        <title>The complete genome sequence of Mycobacterium bovis.</title>
        <authorList>
            <person name="Garnier T."/>
            <person name="Eiglmeier K."/>
            <person name="Camus J.-C."/>
            <person name="Medina N."/>
            <person name="Mansoor H."/>
            <person name="Pryor M."/>
            <person name="Duthoy S."/>
            <person name="Grondin S."/>
            <person name="Lacroix C."/>
            <person name="Monsempe C."/>
            <person name="Simon S."/>
            <person name="Harris B."/>
            <person name="Atkin R."/>
            <person name="Doggett J."/>
            <person name="Mayes R."/>
            <person name="Keating L."/>
            <person name="Wheeler P.R."/>
            <person name="Parkhill J."/>
            <person name="Barrell B.G."/>
            <person name="Cole S.T."/>
            <person name="Gordon S.V."/>
            <person name="Hewinson R.G."/>
        </authorList>
    </citation>
    <scope>NUCLEOTIDE SEQUENCE [LARGE SCALE GENOMIC DNA]</scope>
    <source>
        <strain>ATCC BAA-935 / AF2122/97</strain>
    </source>
</reference>
<reference key="2">
    <citation type="journal article" date="2017" name="Genome Announc.">
        <title>Updated reference genome sequence and annotation of Mycobacterium bovis AF2122/97.</title>
        <authorList>
            <person name="Malone K.M."/>
            <person name="Farrell D."/>
            <person name="Stuber T.P."/>
            <person name="Schubert O.T."/>
            <person name="Aebersold R."/>
            <person name="Robbe-Austerman S."/>
            <person name="Gordon S.V."/>
        </authorList>
    </citation>
    <scope>NUCLEOTIDE SEQUENCE [LARGE SCALE GENOMIC DNA]</scope>
    <scope>GENOME REANNOTATION</scope>
    <source>
        <strain>ATCC BAA-935 / AF2122/97</strain>
    </source>
</reference>
<organism>
    <name type="scientific">Mycobacterium bovis (strain ATCC BAA-935 / AF2122/97)</name>
    <dbReference type="NCBI Taxonomy" id="233413"/>
    <lineage>
        <taxon>Bacteria</taxon>
        <taxon>Bacillati</taxon>
        <taxon>Actinomycetota</taxon>
        <taxon>Actinomycetes</taxon>
        <taxon>Mycobacteriales</taxon>
        <taxon>Mycobacteriaceae</taxon>
        <taxon>Mycobacterium</taxon>
        <taxon>Mycobacterium tuberculosis complex</taxon>
    </lineage>
</organism>